<name>Y2315_YERPE</name>
<reference key="1">
    <citation type="journal article" date="2001" name="Nature">
        <title>Genome sequence of Yersinia pestis, the causative agent of plague.</title>
        <authorList>
            <person name="Parkhill J."/>
            <person name="Wren B.W."/>
            <person name="Thomson N.R."/>
            <person name="Titball R.W."/>
            <person name="Holden M.T.G."/>
            <person name="Prentice M.B."/>
            <person name="Sebaihia M."/>
            <person name="James K.D."/>
            <person name="Churcher C.M."/>
            <person name="Mungall K.L."/>
            <person name="Baker S."/>
            <person name="Basham D."/>
            <person name="Bentley S.D."/>
            <person name="Brooks K."/>
            <person name="Cerdeno-Tarraga A.-M."/>
            <person name="Chillingworth T."/>
            <person name="Cronin A."/>
            <person name="Davies R.M."/>
            <person name="Davis P."/>
            <person name="Dougan G."/>
            <person name="Feltwell T."/>
            <person name="Hamlin N."/>
            <person name="Holroyd S."/>
            <person name="Jagels K."/>
            <person name="Karlyshev A.V."/>
            <person name="Leather S."/>
            <person name="Moule S."/>
            <person name="Oyston P.C.F."/>
            <person name="Quail M.A."/>
            <person name="Rutherford K.M."/>
            <person name="Simmonds M."/>
            <person name="Skelton J."/>
            <person name="Stevens K."/>
            <person name="Whitehead S."/>
            <person name="Barrell B.G."/>
        </authorList>
    </citation>
    <scope>NUCLEOTIDE SEQUENCE [LARGE SCALE GENOMIC DNA]</scope>
    <source>
        <strain>CO-92 / Biovar Orientalis</strain>
    </source>
</reference>
<reference key="2">
    <citation type="journal article" date="2004" name="DNA Res.">
        <title>Complete genome sequence of Yersinia pestis strain 91001, an isolate avirulent to humans.</title>
        <authorList>
            <person name="Song Y."/>
            <person name="Tong Z."/>
            <person name="Wang J."/>
            <person name="Wang L."/>
            <person name="Guo Z."/>
            <person name="Han Y."/>
            <person name="Zhang J."/>
            <person name="Pei D."/>
            <person name="Zhou D."/>
            <person name="Qin H."/>
            <person name="Pang X."/>
            <person name="Han Y."/>
            <person name="Zhai J."/>
            <person name="Li M."/>
            <person name="Cui B."/>
            <person name="Qi Z."/>
            <person name="Jin L."/>
            <person name="Dai R."/>
            <person name="Chen F."/>
            <person name="Li S."/>
            <person name="Ye C."/>
            <person name="Du Z."/>
            <person name="Lin W."/>
            <person name="Wang J."/>
            <person name="Yu J."/>
            <person name="Yang H."/>
            <person name="Wang J."/>
            <person name="Huang P."/>
            <person name="Yang R."/>
        </authorList>
    </citation>
    <scope>NUCLEOTIDE SEQUENCE [LARGE SCALE GENOMIC DNA]</scope>
    <source>
        <strain>91001 / Biovar Mediaevalis</strain>
    </source>
</reference>
<proteinExistence type="inferred from homology"/>
<keyword id="KW-0574">Periplasm</keyword>
<keyword id="KW-1185">Reference proteome</keyword>
<keyword id="KW-0732">Signal</keyword>
<organism>
    <name type="scientific">Yersinia pestis</name>
    <dbReference type="NCBI Taxonomy" id="632"/>
    <lineage>
        <taxon>Bacteria</taxon>
        <taxon>Pseudomonadati</taxon>
        <taxon>Pseudomonadota</taxon>
        <taxon>Gammaproteobacteria</taxon>
        <taxon>Enterobacterales</taxon>
        <taxon>Yersiniaceae</taxon>
        <taxon>Yersinia</taxon>
    </lineage>
</organism>
<gene>
    <name type="ordered locus">YPO2315</name>
    <name type="ordered locus">YP_2102</name>
</gene>
<feature type="signal peptide" evidence="1">
    <location>
        <begin position="1"/>
        <end position="23"/>
    </location>
</feature>
<feature type="chain" id="PRO_0000036291" description="UPF0312 protein YPO2315/YP_2102">
    <location>
        <begin position="24"/>
        <end position="192"/>
    </location>
</feature>
<protein>
    <recommendedName>
        <fullName evidence="1">UPF0312 protein YPO2315/YP_2102</fullName>
    </recommendedName>
</protein>
<accession>Q8ZE68</accession>
<accession>Q0WEK6</accession>
<evidence type="ECO:0000255" key="1">
    <source>
        <dbReference type="HAMAP-Rule" id="MF_00780"/>
    </source>
</evidence>
<sequence>MINKTLLGLSLGALMFTAGSAVAADYKIDKEGQHAFIEFRIKHLGYSWLYGSFNDFDGSFTFDDKNPAADKVNVVINTNSVDTNHAERDKHLRGKSFLNVAKFPQATFESTEVKKNGDGYSVIGNLTLNGVTKPVTLESKLTGQGNDPWGGYRAGFEANGNIKLKDFNITTDLGPASQEVELILSVEGVQVK</sequence>
<dbReference type="EMBL" id="AL590842">
    <property type="protein sequence ID" value="CAL20943.1"/>
    <property type="molecule type" value="Genomic_DNA"/>
</dbReference>
<dbReference type="EMBL" id="AE017042">
    <property type="protein sequence ID" value="AAS62311.1"/>
    <property type="molecule type" value="Genomic_DNA"/>
</dbReference>
<dbReference type="PIR" id="AD0282">
    <property type="entry name" value="AD0282"/>
</dbReference>
<dbReference type="RefSeq" id="WP_002211011.1">
    <property type="nucleotide sequence ID" value="NZ_WHKM01000047.1"/>
</dbReference>
<dbReference type="RefSeq" id="YP_002347282.1">
    <property type="nucleotide sequence ID" value="NC_003143.1"/>
</dbReference>
<dbReference type="SMR" id="Q8ZE68"/>
<dbReference type="STRING" id="214092.YPO2315"/>
<dbReference type="PaxDb" id="214092-YPO2315"/>
<dbReference type="EnsemblBacteria" id="AAS62311">
    <property type="protein sequence ID" value="AAS62311"/>
    <property type="gene ID" value="YP_2102"/>
</dbReference>
<dbReference type="KEGG" id="ype:YPO2315"/>
<dbReference type="KEGG" id="ypm:YP_2102"/>
<dbReference type="PATRIC" id="fig|214092.21.peg.2720"/>
<dbReference type="eggNOG" id="COG2353">
    <property type="taxonomic scope" value="Bacteria"/>
</dbReference>
<dbReference type="HOGENOM" id="CLU_071003_1_2_6"/>
<dbReference type="OMA" id="IDKQGQH"/>
<dbReference type="OrthoDB" id="9811006at2"/>
<dbReference type="Proteomes" id="UP000000815">
    <property type="component" value="Chromosome"/>
</dbReference>
<dbReference type="Proteomes" id="UP000001019">
    <property type="component" value="Chromosome"/>
</dbReference>
<dbReference type="GO" id="GO:0005615">
    <property type="term" value="C:extracellular space"/>
    <property type="evidence" value="ECO:0000318"/>
    <property type="project" value="GO_Central"/>
</dbReference>
<dbReference type="GO" id="GO:0042597">
    <property type="term" value="C:periplasmic space"/>
    <property type="evidence" value="ECO:0007669"/>
    <property type="project" value="UniProtKB-SubCell"/>
</dbReference>
<dbReference type="Gene3D" id="2.40.128.110">
    <property type="entry name" value="Lipid/polyisoprenoid-binding, YceI-like"/>
    <property type="match status" value="1"/>
</dbReference>
<dbReference type="HAMAP" id="MF_00780">
    <property type="entry name" value="UPF0312"/>
    <property type="match status" value="1"/>
</dbReference>
<dbReference type="InterPro" id="IPR007372">
    <property type="entry name" value="Lipid/polyisoprenoid-bd_YceI"/>
</dbReference>
<dbReference type="InterPro" id="IPR036761">
    <property type="entry name" value="TTHA0802/YceI-like_sf"/>
</dbReference>
<dbReference type="InterPro" id="IPR023480">
    <property type="entry name" value="UPF0312/YceI"/>
</dbReference>
<dbReference type="NCBIfam" id="NF002994">
    <property type="entry name" value="PRK03757.1"/>
    <property type="match status" value="1"/>
</dbReference>
<dbReference type="PANTHER" id="PTHR34406">
    <property type="entry name" value="PROTEIN YCEI"/>
    <property type="match status" value="1"/>
</dbReference>
<dbReference type="PANTHER" id="PTHR34406:SF1">
    <property type="entry name" value="PROTEIN YCEI"/>
    <property type="match status" value="1"/>
</dbReference>
<dbReference type="Pfam" id="PF04264">
    <property type="entry name" value="YceI"/>
    <property type="match status" value="1"/>
</dbReference>
<dbReference type="SMART" id="SM00867">
    <property type="entry name" value="YceI"/>
    <property type="match status" value="1"/>
</dbReference>
<dbReference type="SUPFAM" id="SSF101874">
    <property type="entry name" value="YceI-like"/>
    <property type="match status" value="1"/>
</dbReference>
<comment type="subcellular location">
    <subcellularLocation>
        <location evidence="1">Periplasm</location>
    </subcellularLocation>
</comment>
<comment type="similarity">
    <text evidence="1">Belongs to the UPF0312 family. Type 1 subfamily.</text>
</comment>